<protein>
    <recommendedName>
        <fullName evidence="1">Small ribosomal subunit protein bS18</fullName>
    </recommendedName>
    <alternativeName>
        <fullName evidence="3">30S ribosomal protein S18</fullName>
    </alternativeName>
</protein>
<sequence>MSEASSAPVRRPFHRRRKTCPFSGANAPRIDYKDVRLLQRYISERGKIVPSRITAVSQKKQRELAQAIKRARFLGLLPYVVA</sequence>
<gene>
    <name evidence="1" type="primary">rpsR</name>
    <name type="ordered locus">RHE_CH01439</name>
</gene>
<feature type="chain" id="PRO_1000003581" description="Small ribosomal subunit protein bS18">
    <location>
        <begin position="1"/>
        <end position="82"/>
    </location>
</feature>
<feature type="region of interest" description="Disordered" evidence="2">
    <location>
        <begin position="1"/>
        <end position="20"/>
    </location>
</feature>
<name>RS18_RHIEC</name>
<comment type="function">
    <text evidence="1">Binds as a heterodimer with protein bS6 to the central domain of the 16S rRNA, where it helps stabilize the platform of the 30S subunit.</text>
</comment>
<comment type="subunit">
    <text evidence="1">Part of the 30S ribosomal subunit. Forms a tight heterodimer with protein bS6.</text>
</comment>
<comment type="similarity">
    <text evidence="1">Belongs to the bacterial ribosomal protein bS18 family.</text>
</comment>
<reference key="1">
    <citation type="journal article" date="2006" name="Proc. Natl. Acad. Sci. U.S.A.">
        <title>The partitioned Rhizobium etli genome: genetic and metabolic redundancy in seven interacting replicons.</title>
        <authorList>
            <person name="Gonzalez V."/>
            <person name="Santamaria R.I."/>
            <person name="Bustos P."/>
            <person name="Hernandez-Gonzalez I."/>
            <person name="Medrano-Soto A."/>
            <person name="Moreno-Hagelsieb G."/>
            <person name="Janga S.C."/>
            <person name="Ramirez M.A."/>
            <person name="Jimenez-Jacinto V."/>
            <person name="Collado-Vides J."/>
            <person name="Davila G."/>
        </authorList>
    </citation>
    <scope>NUCLEOTIDE SEQUENCE [LARGE SCALE GENOMIC DNA]</scope>
    <source>
        <strain>ATCC 51251 / DSM 11541 / JCM 21823 / NBRC 15573 / CFN 42</strain>
    </source>
</reference>
<organism>
    <name type="scientific">Rhizobium etli (strain ATCC 51251 / DSM 11541 / JCM 21823 / NBRC 15573 / CFN 42)</name>
    <dbReference type="NCBI Taxonomy" id="347834"/>
    <lineage>
        <taxon>Bacteria</taxon>
        <taxon>Pseudomonadati</taxon>
        <taxon>Pseudomonadota</taxon>
        <taxon>Alphaproteobacteria</taxon>
        <taxon>Hyphomicrobiales</taxon>
        <taxon>Rhizobiaceae</taxon>
        <taxon>Rhizobium/Agrobacterium group</taxon>
        <taxon>Rhizobium</taxon>
    </lineage>
</organism>
<keyword id="KW-1185">Reference proteome</keyword>
<keyword id="KW-0687">Ribonucleoprotein</keyword>
<keyword id="KW-0689">Ribosomal protein</keyword>
<keyword id="KW-0694">RNA-binding</keyword>
<keyword id="KW-0699">rRNA-binding</keyword>
<proteinExistence type="inferred from homology"/>
<evidence type="ECO:0000255" key="1">
    <source>
        <dbReference type="HAMAP-Rule" id="MF_00270"/>
    </source>
</evidence>
<evidence type="ECO:0000256" key="2">
    <source>
        <dbReference type="SAM" id="MobiDB-lite"/>
    </source>
</evidence>
<evidence type="ECO:0000305" key="3"/>
<dbReference type="EMBL" id="CP000133">
    <property type="protein sequence ID" value="ABC90242.1"/>
    <property type="molecule type" value="Genomic_DNA"/>
</dbReference>
<dbReference type="RefSeq" id="WP_004680498.1">
    <property type="nucleotide sequence ID" value="NC_007761.1"/>
</dbReference>
<dbReference type="SMR" id="Q2KA94"/>
<dbReference type="GeneID" id="91147897"/>
<dbReference type="KEGG" id="ret:RHE_CH01439"/>
<dbReference type="eggNOG" id="COG0238">
    <property type="taxonomic scope" value="Bacteria"/>
</dbReference>
<dbReference type="HOGENOM" id="CLU_148710_2_2_5"/>
<dbReference type="OrthoDB" id="9812008at2"/>
<dbReference type="Proteomes" id="UP000001936">
    <property type="component" value="Chromosome"/>
</dbReference>
<dbReference type="GO" id="GO:0022627">
    <property type="term" value="C:cytosolic small ribosomal subunit"/>
    <property type="evidence" value="ECO:0007669"/>
    <property type="project" value="TreeGrafter"/>
</dbReference>
<dbReference type="GO" id="GO:0070181">
    <property type="term" value="F:small ribosomal subunit rRNA binding"/>
    <property type="evidence" value="ECO:0007669"/>
    <property type="project" value="TreeGrafter"/>
</dbReference>
<dbReference type="GO" id="GO:0003735">
    <property type="term" value="F:structural constituent of ribosome"/>
    <property type="evidence" value="ECO:0007669"/>
    <property type="project" value="InterPro"/>
</dbReference>
<dbReference type="GO" id="GO:0006412">
    <property type="term" value="P:translation"/>
    <property type="evidence" value="ECO:0007669"/>
    <property type="project" value="UniProtKB-UniRule"/>
</dbReference>
<dbReference type="Gene3D" id="4.10.640.10">
    <property type="entry name" value="Ribosomal protein S18"/>
    <property type="match status" value="1"/>
</dbReference>
<dbReference type="HAMAP" id="MF_00270">
    <property type="entry name" value="Ribosomal_bS18"/>
    <property type="match status" value="1"/>
</dbReference>
<dbReference type="InterPro" id="IPR001648">
    <property type="entry name" value="Ribosomal_bS18"/>
</dbReference>
<dbReference type="InterPro" id="IPR018275">
    <property type="entry name" value="Ribosomal_bS18_CS"/>
</dbReference>
<dbReference type="InterPro" id="IPR036870">
    <property type="entry name" value="Ribosomal_bS18_sf"/>
</dbReference>
<dbReference type="NCBIfam" id="TIGR00165">
    <property type="entry name" value="S18"/>
    <property type="match status" value="1"/>
</dbReference>
<dbReference type="PANTHER" id="PTHR13479">
    <property type="entry name" value="30S RIBOSOMAL PROTEIN S18"/>
    <property type="match status" value="1"/>
</dbReference>
<dbReference type="PANTHER" id="PTHR13479:SF40">
    <property type="entry name" value="SMALL RIBOSOMAL SUBUNIT PROTEIN BS18M"/>
    <property type="match status" value="1"/>
</dbReference>
<dbReference type="Pfam" id="PF01084">
    <property type="entry name" value="Ribosomal_S18"/>
    <property type="match status" value="1"/>
</dbReference>
<dbReference type="PRINTS" id="PR00974">
    <property type="entry name" value="RIBOSOMALS18"/>
</dbReference>
<dbReference type="SUPFAM" id="SSF46911">
    <property type="entry name" value="Ribosomal protein S18"/>
    <property type="match status" value="1"/>
</dbReference>
<dbReference type="PROSITE" id="PS00057">
    <property type="entry name" value="RIBOSOMAL_S18"/>
    <property type="match status" value="1"/>
</dbReference>
<accession>Q2KA94</accession>